<reference key="1">
    <citation type="journal article" date="1996" name="DNA Res.">
        <title>A 460-kb DNA sequence of the Escherichia coli K-12 genome corresponding to the 40.1-50.0 min region on the linkage map.</title>
        <authorList>
            <person name="Itoh T."/>
            <person name="Aiba H."/>
            <person name="Baba T."/>
            <person name="Fujita K."/>
            <person name="Hayashi K."/>
            <person name="Inada T."/>
            <person name="Isono K."/>
            <person name="Kasai H."/>
            <person name="Kimura S."/>
            <person name="Kitakawa M."/>
            <person name="Kitagawa M."/>
            <person name="Makino K."/>
            <person name="Miki T."/>
            <person name="Mizobuchi K."/>
            <person name="Mori H."/>
            <person name="Mori T."/>
            <person name="Motomura K."/>
            <person name="Nakade S."/>
            <person name="Nakamura Y."/>
            <person name="Nashimoto H."/>
            <person name="Nishio Y."/>
            <person name="Oshima T."/>
            <person name="Saito N."/>
            <person name="Sampei G."/>
            <person name="Seki Y."/>
            <person name="Sivasundaram S."/>
            <person name="Tagami H."/>
            <person name="Takeda J."/>
            <person name="Takemoto K."/>
            <person name="Wada C."/>
            <person name="Yamamoto Y."/>
            <person name="Horiuchi T."/>
        </authorList>
    </citation>
    <scope>NUCLEOTIDE SEQUENCE [LARGE SCALE GENOMIC DNA]</scope>
    <source>
        <strain>K12 / W3110 / ATCC 27325 / DSM 5911</strain>
    </source>
</reference>
<reference key="2">
    <citation type="journal article" date="1997" name="Science">
        <title>The complete genome sequence of Escherichia coli K-12.</title>
        <authorList>
            <person name="Blattner F.R."/>
            <person name="Plunkett G. III"/>
            <person name="Bloch C.A."/>
            <person name="Perna N.T."/>
            <person name="Burland V."/>
            <person name="Riley M."/>
            <person name="Collado-Vides J."/>
            <person name="Glasner J.D."/>
            <person name="Rode C.K."/>
            <person name="Mayhew G.F."/>
            <person name="Gregor J."/>
            <person name="Davis N.W."/>
            <person name="Kirkpatrick H.A."/>
            <person name="Goeden M.A."/>
            <person name="Rose D.J."/>
            <person name="Mau B."/>
            <person name="Shao Y."/>
        </authorList>
    </citation>
    <scope>NUCLEOTIDE SEQUENCE [LARGE SCALE GENOMIC DNA]</scope>
    <source>
        <strain>K12 / MG1655 / ATCC 47076</strain>
    </source>
</reference>
<reference key="3">
    <citation type="journal article" date="2006" name="Mol. Syst. Biol.">
        <title>Highly accurate genome sequences of Escherichia coli K-12 strains MG1655 and W3110.</title>
        <authorList>
            <person name="Hayashi K."/>
            <person name="Morooka N."/>
            <person name="Yamamoto Y."/>
            <person name="Fujita K."/>
            <person name="Isono K."/>
            <person name="Choi S."/>
            <person name="Ohtsubo E."/>
            <person name="Baba T."/>
            <person name="Wanner B.L."/>
            <person name="Mori H."/>
            <person name="Horiuchi T."/>
        </authorList>
    </citation>
    <scope>NUCLEOTIDE SEQUENCE [LARGE SCALE GENOMIC DNA]</scope>
    <source>
        <strain>K12 / W3110 / ATCC 27325 / DSM 5911</strain>
    </source>
</reference>
<reference key="4">
    <citation type="journal article" date="1997" name="Electrophoresis">
        <title>Comparing the predicted and observed properties of proteins encoded in the genome of Escherichia coli K-12.</title>
        <authorList>
            <person name="Link A.J."/>
            <person name="Robison K."/>
            <person name="Church G.M."/>
        </authorList>
    </citation>
    <scope>PROTEIN SEQUENCE OF 1-12</scope>
    <source>
        <strain>K12 / EMG2</strain>
    </source>
</reference>
<reference key="5">
    <citation type="journal article" date="1999" name="Electrophoresis">
        <title>Enrichment of low abundance proteins of Escherichia coli by hydroxyapatite chromatography.</title>
        <authorList>
            <person name="Fountoulakis M."/>
            <person name="Takacs M.-F."/>
            <person name="Berndt P."/>
            <person name="Langen H."/>
            <person name="Takacs B."/>
        </authorList>
    </citation>
    <scope>IDENTIFICATION BY MASS SPECTROMETRY</scope>
    <source>
        <strain>B / BL21</strain>
    </source>
</reference>
<reference key="6">
    <citation type="journal article" date="2010" name="Acta Crystallogr. F">
        <title>Crystallization and preliminary X-ray diffraction analysis of the putative aldose 1-epimerase YeaD from Escherichia coli.</title>
        <authorList>
            <person name="You W."/>
            <person name="Qiu X."/>
            <person name="Zhang Y."/>
            <person name="Ma J."/>
            <person name="Gao Y."/>
            <person name="Zhang X."/>
            <person name="Niu L."/>
            <person name="Teng M."/>
        </authorList>
    </citation>
    <scope>CRYSTALLIZATION</scope>
    <scope>SUBUNIT</scope>
</reference>
<name>YEAD_ECOLI</name>
<organism>
    <name type="scientific">Escherichia coli (strain K12)</name>
    <dbReference type="NCBI Taxonomy" id="83333"/>
    <lineage>
        <taxon>Bacteria</taxon>
        <taxon>Pseudomonadati</taxon>
        <taxon>Pseudomonadota</taxon>
        <taxon>Gammaproteobacteria</taxon>
        <taxon>Enterobacterales</taxon>
        <taxon>Enterobacteriaceae</taxon>
        <taxon>Escherichia</taxon>
    </lineage>
</organism>
<comment type="catalytic activity">
    <reaction evidence="1">
        <text>alpha-D-glucose 6-phosphate = beta-D-glucose 6-phosphate</text>
        <dbReference type="Rhea" id="RHEA:16249"/>
        <dbReference type="ChEBI" id="CHEBI:58225"/>
        <dbReference type="ChEBI" id="CHEBI:58247"/>
        <dbReference type="EC" id="5.1.3.15"/>
    </reaction>
</comment>
<comment type="subunit">
    <text evidence="2">Monomer in solution.</text>
</comment>
<comment type="similarity">
    <text evidence="3">Belongs to the glucose-6-phosphate 1-epimerase family.</text>
</comment>
<proteinExistence type="evidence at protein level"/>
<gene>
    <name type="primary">yeaD</name>
    <name type="synonym">yzzQ</name>
    <name type="ordered locus">b1780</name>
    <name type="ordered locus">JW1769</name>
</gene>
<accession>P39173</accession>
<accession>P76233</accession>
<accession>P76913</accession>
<dbReference type="EC" id="5.1.3.15" evidence="1"/>
<dbReference type="EMBL" id="U00096">
    <property type="protein sequence ID" value="AAC74850.2"/>
    <property type="molecule type" value="Genomic_DNA"/>
</dbReference>
<dbReference type="EMBL" id="AP009048">
    <property type="protein sequence ID" value="BAA15577.1"/>
    <property type="molecule type" value="Genomic_DNA"/>
</dbReference>
<dbReference type="PIR" id="D64938">
    <property type="entry name" value="D64938"/>
</dbReference>
<dbReference type="RefSeq" id="NP_416294.4">
    <property type="nucleotide sequence ID" value="NC_000913.3"/>
</dbReference>
<dbReference type="RefSeq" id="WP_001335909.1">
    <property type="nucleotide sequence ID" value="NZ_SSZK01000001.1"/>
</dbReference>
<dbReference type="SMR" id="P39173"/>
<dbReference type="BioGRID" id="4260309">
    <property type="interactions" value="36"/>
</dbReference>
<dbReference type="FunCoup" id="P39173">
    <property type="interactions" value="532"/>
</dbReference>
<dbReference type="IntAct" id="P39173">
    <property type="interactions" value="2"/>
</dbReference>
<dbReference type="STRING" id="511145.b1780"/>
<dbReference type="jPOST" id="P39173"/>
<dbReference type="PaxDb" id="511145-b1780"/>
<dbReference type="EnsemblBacteria" id="AAC74850">
    <property type="protein sequence ID" value="AAC74850"/>
    <property type="gene ID" value="b1780"/>
</dbReference>
<dbReference type="GeneID" id="946572"/>
<dbReference type="KEGG" id="ecj:JW1769"/>
<dbReference type="KEGG" id="eco:b1780"/>
<dbReference type="KEGG" id="ecoc:C3026_10155"/>
<dbReference type="PATRIC" id="fig|511145.12.peg.1853"/>
<dbReference type="EchoBASE" id="EB2544"/>
<dbReference type="eggNOG" id="COG0676">
    <property type="taxonomic scope" value="Bacteria"/>
</dbReference>
<dbReference type="HOGENOM" id="CLU_048345_4_1_6"/>
<dbReference type="InParanoid" id="P39173"/>
<dbReference type="OMA" id="TQALHSY"/>
<dbReference type="OrthoDB" id="9790727at2"/>
<dbReference type="PhylomeDB" id="P39173"/>
<dbReference type="BioCyc" id="EcoCyc:G6966-MONOMER"/>
<dbReference type="PRO" id="PR:P39173"/>
<dbReference type="Proteomes" id="UP000000625">
    <property type="component" value="Chromosome"/>
</dbReference>
<dbReference type="GO" id="GO:0005737">
    <property type="term" value="C:cytoplasm"/>
    <property type="evidence" value="ECO:0000318"/>
    <property type="project" value="GO_Central"/>
</dbReference>
<dbReference type="GO" id="GO:0005829">
    <property type="term" value="C:cytosol"/>
    <property type="evidence" value="ECO:0000314"/>
    <property type="project" value="EcoCyc"/>
</dbReference>
<dbReference type="GO" id="GO:0030246">
    <property type="term" value="F:carbohydrate binding"/>
    <property type="evidence" value="ECO:0007669"/>
    <property type="project" value="InterPro"/>
</dbReference>
<dbReference type="GO" id="GO:0047938">
    <property type="term" value="F:glucose-6-phosphate 1-epimerase activity"/>
    <property type="evidence" value="ECO:0000318"/>
    <property type="project" value="GO_Central"/>
</dbReference>
<dbReference type="GO" id="GO:0005975">
    <property type="term" value="P:carbohydrate metabolic process"/>
    <property type="evidence" value="ECO:0007669"/>
    <property type="project" value="InterPro"/>
</dbReference>
<dbReference type="GO" id="GO:0006974">
    <property type="term" value="P:DNA damage response"/>
    <property type="evidence" value="ECO:0000270"/>
    <property type="project" value="EcoliWiki"/>
</dbReference>
<dbReference type="CDD" id="cd09020">
    <property type="entry name" value="D-hex-6-P-epi_like"/>
    <property type="match status" value="1"/>
</dbReference>
<dbReference type="FunFam" id="2.70.98.10:FF:000011">
    <property type="entry name" value="Putative glucose-6-phosphate 1-epimerase"/>
    <property type="match status" value="1"/>
</dbReference>
<dbReference type="Gene3D" id="2.70.98.10">
    <property type="match status" value="1"/>
</dbReference>
<dbReference type="InterPro" id="IPR008183">
    <property type="entry name" value="Aldose_1/G6P_1-epimerase"/>
</dbReference>
<dbReference type="InterPro" id="IPR025532">
    <property type="entry name" value="G6P_1-epimerase"/>
</dbReference>
<dbReference type="InterPro" id="IPR011013">
    <property type="entry name" value="Gal_mutarotase_sf_dom"/>
</dbReference>
<dbReference type="InterPro" id="IPR014718">
    <property type="entry name" value="GH-type_carb-bd"/>
</dbReference>
<dbReference type="PANTHER" id="PTHR11122">
    <property type="entry name" value="APOSPORY-ASSOCIATED PROTEIN C-RELATED"/>
    <property type="match status" value="1"/>
</dbReference>
<dbReference type="PANTHER" id="PTHR11122:SF13">
    <property type="entry name" value="GLUCOSE-6-PHOSPHATE 1-EPIMERASE"/>
    <property type="match status" value="1"/>
</dbReference>
<dbReference type="Pfam" id="PF01263">
    <property type="entry name" value="Aldose_epim"/>
    <property type="match status" value="1"/>
</dbReference>
<dbReference type="PIRSF" id="PIRSF016020">
    <property type="entry name" value="PHexose_mutarotase"/>
    <property type="match status" value="1"/>
</dbReference>
<dbReference type="SUPFAM" id="SSF74650">
    <property type="entry name" value="Galactose mutarotase-like"/>
    <property type="match status" value="1"/>
</dbReference>
<evidence type="ECO:0000250" key="1">
    <source>
        <dbReference type="UniProtKB" id="Q03161"/>
    </source>
</evidence>
<evidence type="ECO:0000269" key="2">
    <source>
    </source>
</evidence>
<evidence type="ECO:0000305" key="3"/>
<sequence>MIKKIFALPVIEQISPVLSRRKLDELDLIVVDHPQVKASFALQGAHLLSWKPAGEEEVLWLSNNTPFKNGVAIRGGVPVCWPWFGPAAQQGLPAHGFARNLPWTLKSHHEDADGVALTFELTQSEETKKFWPHDFTLLAHFRVGKTCEIDLESHGEFETTSALHTYFNVGDIAKVSVSGLGDRFIDKVNDAKENVLTDGIQTFPDRTDRVYLNPQDCSVINDEALNRIIAVGHQHHLNVVGWNPGPALSISMGDMPDDGYKTFVCVETAYASETQKVTKEKPAHLAQSIRVAKR</sequence>
<protein>
    <recommendedName>
        <fullName evidence="1">Putative glucose-6-phosphate 1-epimerase</fullName>
        <ecNumber evidence="1">5.1.3.15</ecNumber>
    </recommendedName>
    <alternativeName>
        <fullName evidence="1">Putative D-hexose-6-phosphate mutarotase</fullName>
    </alternativeName>
    <alternativeName>
        <fullName>Unknown protein from 2D-page spots T26/PR37</fullName>
    </alternativeName>
</protein>
<keyword id="KW-0903">Direct protein sequencing</keyword>
<keyword id="KW-0413">Isomerase</keyword>
<keyword id="KW-1185">Reference proteome</keyword>
<feature type="chain" id="PRO_0000213036" description="Putative glucose-6-phosphate 1-epimerase">
    <location>
        <begin position="1"/>
        <end position="294"/>
    </location>
</feature>
<feature type="active site" evidence="1">
    <location>
        <position position="164"/>
    </location>
</feature>
<feature type="active site" evidence="1">
    <location>
        <position position="267"/>
    </location>
</feature>
<feature type="binding site" evidence="1">
    <location>
        <position position="74"/>
    </location>
    <ligand>
        <name>substrate</name>
    </ligand>
</feature>
<feature type="binding site" evidence="1">
    <location>
        <position position="99"/>
    </location>
    <ligand>
        <name>substrate</name>
    </ligand>
</feature>
<feature type="binding site" evidence="1">
    <location>
        <position position="208"/>
    </location>
    <ligand>
        <name>substrate</name>
    </ligand>
</feature>